<feature type="initiator methionine" description="Removed" evidence="1">
    <location>
        <position position="1"/>
    </location>
</feature>
<feature type="chain" id="PRO_0000091616" description="3-hydroxydecanoyl-[acyl-carrier-protein] dehydratase">
    <location>
        <begin position="2"/>
        <end position="172"/>
    </location>
</feature>
<feature type="active site" evidence="1">
    <location>
        <position position="71"/>
    </location>
</feature>
<feature type="sequence variant" description="In allele FABA6; TS.">
    <original>P</original>
    <variation>L</variation>
    <location>
        <position position="76"/>
    </location>
</feature>
<feature type="sequence variant" description="In allele FABA2; TS.">
    <original>G</original>
    <variation>D</variation>
    <location>
        <position position="102"/>
    </location>
</feature>
<feature type="sequence conflict" description="In Ref. 2; AAP16468." evidence="2" ref="2">
    <original>R</original>
    <variation>H</variation>
    <location>
        <position position="18"/>
    </location>
</feature>
<feature type="sequence conflict" description="In Ref. 2; AAP16468." evidence="2" ref="2">
    <original>M</original>
    <variation>I</variation>
    <location>
        <position position="37"/>
    </location>
</feature>
<feature type="sequence conflict" description="In Ref. 2; AAP16468." evidence="2" ref="2">
    <original>G</original>
    <variation>C</variation>
    <location>
        <position position="152"/>
    </location>
</feature>
<comment type="function">
    <text evidence="1">Necessary for the introduction of cis unsaturation into fatty acids. Catalyzes the dehydration of (3R)-3-hydroxydecanoyl-ACP to E-(2)-decenoyl-ACP and then its isomerization to Z-(3)-decenoyl-ACP. Can catalyze the dehydratase reaction for beta-hydroxyacyl-ACPs with saturated chain lengths up to 16:0, being most active on intermediate chain length (By similarity).</text>
</comment>
<comment type="catalytic activity">
    <reaction>
        <text>a (3R)-hydroxyacyl-[ACP] = a (2E)-enoyl-[ACP] + H2O</text>
        <dbReference type="Rhea" id="RHEA:13097"/>
        <dbReference type="Rhea" id="RHEA-COMP:9925"/>
        <dbReference type="Rhea" id="RHEA-COMP:9945"/>
        <dbReference type="ChEBI" id="CHEBI:15377"/>
        <dbReference type="ChEBI" id="CHEBI:78784"/>
        <dbReference type="ChEBI" id="CHEBI:78827"/>
        <dbReference type="EC" id="4.2.1.59"/>
    </reaction>
</comment>
<comment type="catalytic activity">
    <reaction>
        <text>(3R)-hydroxydecanoyl-[ACP] = (2E)-decenoyl-[ACP] + H2O</text>
        <dbReference type="Rhea" id="RHEA:41860"/>
        <dbReference type="Rhea" id="RHEA-COMP:9638"/>
        <dbReference type="Rhea" id="RHEA-COMP:9639"/>
        <dbReference type="ChEBI" id="CHEBI:15377"/>
        <dbReference type="ChEBI" id="CHEBI:78466"/>
        <dbReference type="ChEBI" id="CHEBI:78467"/>
    </reaction>
</comment>
<comment type="catalytic activity">
    <reaction>
        <text>(2E)-decenoyl-[ACP] = (3Z)-decenoyl-[ACP]</text>
        <dbReference type="Rhea" id="RHEA:23568"/>
        <dbReference type="Rhea" id="RHEA-COMP:9639"/>
        <dbReference type="Rhea" id="RHEA-COMP:9927"/>
        <dbReference type="ChEBI" id="CHEBI:78467"/>
        <dbReference type="ChEBI" id="CHEBI:78798"/>
        <dbReference type="EC" id="5.3.3.14"/>
    </reaction>
</comment>
<comment type="pathway">
    <text>Lipid metabolism; fatty acid biosynthesis.</text>
</comment>
<comment type="subunit">
    <text evidence="1">Homodimer.</text>
</comment>
<comment type="subcellular location">
    <subcellularLocation>
        <location evidence="1">Cytoplasm</location>
    </subcellularLocation>
</comment>
<comment type="similarity">
    <text evidence="2">Belongs to the thioester dehydratase family. FabA subfamily.</text>
</comment>
<evidence type="ECO:0000250" key="1"/>
<evidence type="ECO:0000305" key="2"/>
<protein>
    <recommendedName>
        <fullName>3-hydroxydecanoyl-[acyl-carrier-protein] dehydratase</fullName>
        <ecNumber>4.2.1.59</ecNumber>
    </recommendedName>
    <alternativeName>
        <fullName>3-hydroxyacyl-[acyl-carrier-protein] dehydratase FabA</fullName>
    </alternativeName>
    <alternativeName>
        <fullName>Beta-hydroxydecanoyl thioester dehydrase</fullName>
    </alternativeName>
    <alternativeName>
        <fullName>Trans-2-decenoyl-[acyl-carrier-protein] isomerase</fullName>
        <ecNumber>5.3.3.14</ecNumber>
    </alternativeName>
</protein>
<gene>
    <name type="primary">fabA</name>
    <name type="ordered locus">SF0954</name>
    <name type="ordered locus">S1020</name>
</gene>
<proteinExistence type="inferred from homology"/>
<name>FABA_SHIFL</name>
<organism>
    <name type="scientific">Shigella flexneri</name>
    <dbReference type="NCBI Taxonomy" id="623"/>
    <lineage>
        <taxon>Bacteria</taxon>
        <taxon>Pseudomonadati</taxon>
        <taxon>Pseudomonadota</taxon>
        <taxon>Gammaproteobacteria</taxon>
        <taxon>Enterobacterales</taxon>
        <taxon>Enterobacteriaceae</taxon>
        <taxon>Shigella</taxon>
    </lineage>
</organism>
<accession>P0A6Q5</accession>
<accession>P18391</accession>
<accession>Q59383</accession>
<sequence length="172" mass="18969">MVDKRESYTKEDLLASGRGELFGAKGPQLPAPNMLMMDRVVKMTETGGNFDKGYVEAELDINPDLWFFGCHFIGDPVMPGCLGLDAMWQLVGFYLGWLGGEGKGRALGVGEVKFTGQVLPTAKKVTYRIHFKRIVNRRLIMGLADGEVLVDGRLIYTASDLKVGLFQDTSAF</sequence>
<keyword id="KW-0963">Cytoplasm</keyword>
<keyword id="KW-0275">Fatty acid biosynthesis</keyword>
<keyword id="KW-0276">Fatty acid metabolism</keyword>
<keyword id="KW-0413">Isomerase</keyword>
<keyword id="KW-0444">Lipid biosynthesis</keyword>
<keyword id="KW-0443">Lipid metabolism</keyword>
<keyword id="KW-0456">Lyase</keyword>
<keyword id="KW-1185">Reference proteome</keyword>
<dbReference type="EC" id="4.2.1.59"/>
<dbReference type="EC" id="5.3.3.14"/>
<dbReference type="EMBL" id="AE005674">
    <property type="protein sequence ID" value="AAN42583.1"/>
    <property type="molecule type" value="Genomic_DNA"/>
</dbReference>
<dbReference type="EMBL" id="AE014073">
    <property type="protein sequence ID" value="AAP16468.1"/>
    <property type="molecule type" value="Genomic_DNA"/>
</dbReference>
<dbReference type="RefSeq" id="NP_706876.1">
    <property type="nucleotide sequence ID" value="NC_004337.2"/>
</dbReference>
<dbReference type="RefSeq" id="WP_000227927.1">
    <property type="nucleotide sequence ID" value="NZ_SUPT01000004.1"/>
</dbReference>
<dbReference type="SMR" id="P0A6Q5"/>
<dbReference type="STRING" id="198214.SF0954"/>
<dbReference type="DrugBank" id="DB03813">
    <property type="generic name" value="2-Decenoyl N-acetyl cysteamine"/>
</dbReference>
<dbReference type="PaxDb" id="198214-SF0954"/>
<dbReference type="GeneID" id="1023905"/>
<dbReference type="GeneID" id="93776460"/>
<dbReference type="KEGG" id="sfl:SF0954"/>
<dbReference type="KEGG" id="sfx:S1020"/>
<dbReference type="PATRIC" id="fig|198214.7.peg.1112"/>
<dbReference type="HOGENOM" id="CLU_097925_0_0_6"/>
<dbReference type="UniPathway" id="UPA00094"/>
<dbReference type="Proteomes" id="UP000001006">
    <property type="component" value="Chromosome"/>
</dbReference>
<dbReference type="Proteomes" id="UP000002673">
    <property type="component" value="Chromosome"/>
</dbReference>
<dbReference type="GO" id="GO:0005737">
    <property type="term" value="C:cytoplasm"/>
    <property type="evidence" value="ECO:0007669"/>
    <property type="project" value="UniProtKB-SubCell"/>
</dbReference>
<dbReference type="GO" id="GO:0019171">
    <property type="term" value="F:(3R)-hydroxyacyl-[acyl-carrier-protein] dehydratase activity"/>
    <property type="evidence" value="ECO:0007669"/>
    <property type="project" value="UniProtKB-UniRule"/>
</dbReference>
<dbReference type="GO" id="GO:0034017">
    <property type="term" value="F:trans-2-decenoyl-acyl-carrier-protein isomerase activity"/>
    <property type="evidence" value="ECO:0007669"/>
    <property type="project" value="UniProtKB-UniRule"/>
</dbReference>
<dbReference type="GO" id="GO:0006636">
    <property type="term" value="P:unsaturated fatty acid biosynthetic process"/>
    <property type="evidence" value="ECO:0007669"/>
    <property type="project" value="UniProtKB-UniRule"/>
</dbReference>
<dbReference type="CDD" id="cd01287">
    <property type="entry name" value="FabA"/>
    <property type="match status" value="1"/>
</dbReference>
<dbReference type="FunFam" id="3.10.129.10:FF:000003">
    <property type="entry name" value="3-hydroxydecanoyl-[acyl-carrier-protein] dehydratase"/>
    <property type="match status" value="1"/>
</dbReference>
<dbReference type="Gene3D" id="3.10.129.10">
    <property type="entry name" value="Hotdog Thioesterase"/>
    <property type="match status" value="1"/>
</dbReference>
<dbReference type="HAMAP" id="MF_00405">
    <property type="entry name" value="FabA"/>
    <property type="match status" value="1"/>
</dbReference>
<dbReference type="InterPro" id="IPR010083">
    <property type="entry name" value="FabA"/>
</dbReference>
<dbReference type="InterPro" id="IPR013114">
    <property type="entry name" value="FabA_FabZ"/>
</dbReference>
<dbReference type="InterPro" id="IPR029069">
    <property type="entry name" value="HotDog_dom_sf"/>
</dbReference>
<dbReference type="NCBIfam" id="TIGR01749">
    <property type="entry name" value="fabA"/>
    <property type="match status" value="1"/>
</dbReference>
<dbReference type="NCBIfam" id="NF003509">
    <property type="entry name" value="PRK05174.1"/>
    <property type="match status" value="1"/>
</dbReference>
<dbReference type="PANTHER" id="PTHR30272">
    <property type="entry name" value="3-HYDROXYACYL-[ACYL-CARRIER-PROTEIN] DEHYDRATASE"/>
    <property type="match status" value="1"/>
</dbReference>
<dbReference type="PANTHER" id="PTHR30272:SF8">
    <property type="entry name" value="3-HYDROXYDECANOYL-[ACYL-CARRIER-PROTEIN] DEHYDRATASE"/>
    <property type="match status" value="1"/>
</dbReference>
<dbReference type="Pfam" id="PF07977">
    <property type="entry name" value="FabA"/>
    <property type="match status" value="1"/>
</dbReference>
<dbReference type="SUPFAM" id="SSF54637">
    <property type="entry name" value="Thioesterase/thiol ester dehydrase-isomerase"/>
    <property type="match status" value="1"/>
</dbReference>
<reference key="1">
    <citation type="journal article" date="2002" name="Nucleic Acids Res.">
        <title>Genome sequence of Shigella flexneri 2a: insights into pathogenicity through comparison with genomes of Escherichia coli K12 and O157.</title>
        <authorList>
            <person name="Jin Q."/>
            <person name="Yuan Z."/>
            <person name="Xu J."/>
            <person name="Wang Y."/>
            <person name="Shen Y."/>
            <person name="Lu W."/>
            <person name="Wang J."/>
            <person name="Liu H."/>
            <person name="Yang J."/>
            <person name="Yang F."/>
            <person name="Zhang X."/>
            <person name="Zhang J."/>
            <person name="Yang G."/>
            <person name="Wu H."/>
            <person name="Qu D."/>
            <person name="Dong J."/>
            <person name="Sun L."/>
            <person name="Xue Y."/>
            <person name="Zhao A."/>
            <person name="Gao Y."/>
            <person name="Zhu J."/>
            <person name="Kan B."/>
            <person name="Ding K."/>
            <person name="Chen S."/>
            <person name="Cheng H."/>
            <person name="Yao Z."/>
            <person name="He B."/>
            <person name="Chen R."/>
            <person name="Ma D."/>
            <person name="Qiang B."/>
            <person name="Wen Y."/>
            <person name="Hou Y."/>
            <person name="Yu J."/>
        </authorList>
    </citation>
    <scope>NUCLEOTIDE SEQUENCE [LARGE SCALE GENOMIC DNA]</scope>
    <source>
        <strain>301 / Serotype 2a</strain>
    </source>
</reference>
<reference key="2">
    <citation type="journal article" date="2003" name="Infect. Immun.">
        <title>Complete genome sequence and comparative genomics of Shigella flexneri serotype 2a strain 2457T.</title>
        <authorList>
            <person name="Wei J."/>
            <person name="Goldberg M.B."/>
            <person name="Burland V."/>
            <person name="Venkatesan M.M."/>
            <person name="Deng W."/>
            <person name="Fournier G."/>
            <person name="Mayhew G.F."/>
            <person name="Plunkett G. III"/>
            <person name="Rose D.J."/>
            <person name="Darling A."/>
            <person name="Mau B."/>
            <person name="Perna N.T."/>
            <person name="Payne S.M."/>
            <person name="Runyen-Janecky L.J."/>
            <person name="Zhou S."/>
            <person name="Schwartz D.C."/>
            <person name="Blattner F.R."/>
        </authorList>
    </citation>
    <scope>NUCLEOTIDE SEQUENCE [LARGE SCALE GENOMIC DNA]</scope>
    <source>
        <strain>ATCC 700930 / 2457T / Serotype 2a</strain>
    </source>
</reference>